<comment type="function">
    <text evidence="1">Succinyl-CoA synthetase functions in the citric acid cycle (TCA), coupling the hydrolysis of succinyl-CoA to the synthesis of either ATP or GTP and thus represents the only step of substrate-level phosphorylation in the TCA. The beta subunit provides nucleotide specificity of the enzyme and binds the substrate succinate, while the binding sites for coenzyme A and phosphate are found in the alpha subunit.</text>
</comment>
<comment type="catalytic activity">
    <reaction evidence="1">
        <text>succinate + ATP + CoA = succinyl-CoA + ADP + phosphate</text>
        <dbReference type="Rhea" id="RHEA:17661"/>
        <dbReference type="ChEBI" id="CHEBI:30031"/>
        <dbReference type="ChEBI" id="CHEBI:30616"/>
        <dbReference type="ChEBI" id="CHEBI:43474"/>
        <dbReference type="ChEBI" id="CHEBI:57287"/>
        <dbReference type="ChEBI" id="CHEBI:57292"/>
        <dbReference type="ChEBI" id="CHEBI:456216"/>
        <dbReference type="EC" id="6.2.1.5"/>
    </reaction>
    <physiologicalReaction direction="right-to-left" evidence="1">
        <dbReference type="Rhea" id="RHEA:17663"/>
    </physiologicalReaction>
</comment>
<comment type="catalytic activity">
    <reaction evidence="1">
        <text>GTP + succinate + CoA = succinyl-CoA + GDP + phosphate</text>
        <dbReference type="Rhea" id="RHEA:22120"/>
        <dbReference type="ChEBI" id="CHEBI:30031"/>
        <dbReference type="ChEBI" id="CHEBI:37565"/>
        <dbReference type="ChEBI" id="CHEBI:43474"/>
        <dbReference type="ChEBI" id="CHEBI:57287"/>
        <dbReference type="ChEBI" id="CHEBI:57292"/>
        <dbReference type="ChEBI" id="CHEBI:58189"/>
    </reaction>
    <physiologicalReaction direction="right-to-left" evidence="1">
        <dbReference type="Rhea" id="RHEA:22122"/>
    </physiologicalReaction>
</comment>
<comment type="cofactor">
    <cofactor evidence="1">
        <name>Mg(2+)</name>
        <dbReference type="ChEBI" id="CHEBI:18420"/>
    </cofactor>
    <text evidence="1">Binds 1 Mg(2+) ion per subunit.</text>
</comment>
<comment type="pathway">
    <text evidence="1">Carbohydrate metabolism; tricarboxylic acid cycle; succinate from succinyl-CoA (ligase route): step 1/1.</text>
</comment>
<comment type="subunit">
    <text evidence="1">Heterotetramer of two alpha and two beta subunits.</text>
</comment>
<comment type="similarity">
    <text evidence="1">Belongs to the succinate/malate CoA ligase beta subunit family.</text>
</comment>
<proteinExistence type="inferred from homology"/>
<organism>
    <name type="scientific">Pyrobaculum islandicum (strain DSM 4184 / JCM 9189 / GEO3)</name>
    <dbReference type="NCBI Taxonomy" id="384616"/>
    <lineage>
        <taxon>Archaea</taxon>
        <taxon>Thermoproteota</taxon>
        <taxon>Thermoprotei</taxon>
        <taxon>Thermoproteales</taxon>
        <taxon>Thermoproteaceae</taxon>
        <taxon>Pyrobaculum</taxon>
    </lineage>
</organism>
<gene>
    <name evidence="1" type="primary">sucC</name>
    <name type="ordered locus">Pisl_1026</name>
</gene>
<evidence type="ECO:0000255" key="1">
    <source>
        <dbReference type="HAMAP-Rule" id="MF_00558"/>
    </source>
</evidence>
<sequence>MKLHEYEAKELFLRYGVKIPPGKLALTPDEVRKIAEEIGTPVVLKAQVVVAGRGKAGGIKIAQTPEEAYELSKKMFGMNIKGLVVRKLYVTKYVEVEREMYLSLIIDRASRRYLFLASPIGGVDIEEIAKTSPEKIKKVYVDPSIGLRDYHIRSIISWLGFKPGSQQWQQTASVIQAMYRIMVDYDAELVETNPLALSKEGEVIPLDARVIVDDNALFKHPDLEKALEEDPRDITEFEAYAKKIGFHYVELDGDIGIIGNGAGLTMATMDLVYHFGGRPANFLDIGGGASREVVKEAVKVLLNHPRVKVIFVNIFGGITRADEVALGIKDALAEVKEHTKKIVVRIKGTNEEQGKAILSEIGIPLFENAEEAAKKAVELAKI</sequence>
<dbReference type="EC" id="6.2.1.5" evidence="1"/>
<dbReference type="EMBL" id="CP000504">
    <property type="protein sequence ID" value="ABL88200.1"/>
    <property type="molecule type" value="Genomic_DNA"/>
</dbReference>
<dbReference type="RefSeq" id="WP_011762775.1">
    <property type="nucleotide sequence ID" value="NC_008701.1"/>
</dbReference>
<dbReference type="SMR" id="A1RTB8"/>
<dbReference type="STRING" id="384616.Pisl_1026"/>
<dbReference type="GeneID" id="4616320"/>
<dbReference type="KEGG" id="pis:Pisl_1026"/>
<dbReference type="eggNOG" id="arCOG01337">
    <property type="taxonomic scope" value="Archaea"/>
</dbReference>
<dbReference type="HOGENOM" id="CLU_037430_0_2_2"/>
<dbReference type="OrthoDB" id="146449at2157"/>
<dbReference type="UniPathway" id="UPA00223">
    <property type="reaction ID" value="UER00999"/>
</dbReference>
<dbReference type="Proteomes" id="UP000002595">
    <property type="component" value="Chromosome"/>
</dbReference>
<dbReference type="GO" id="GO:0042709">
    <property type="term" value="C:succinate-CoA ligase complex"/>
    <property type="evidence" value="ECO:0007669"/>
    <property type="project" value="TreeGrafter"/>
</dbReference>
<dbReference type="GO" id="GO:0005524">
    <property type="term" value="F:ATP binding"/>
    <property type="evidence" value="ECO:0007669"/>
    <property type="project" value="UniProtKB-UniRule"/>
</dbReference>
<dbReference type="GO" id="GO:0000287">
    <property type="term" value="F:magnesium ion binding"/>
    <property type="evidence" value="ECO:0007669"/>
    <property type="project" value="UniProtKB-UniRule"/>
</dbReference>
<dbReference type="GO" id="GO:0004775">
    <property type="term" value="F:succinate-CoA ligase (ADP-forming) activity"/>
    <property type="evidence" value="ECO:0007669"/>
    <property type="project" value="UniProtKB-UniRule"/>
</dbReference>
<dbReference type="GO" id="GO:0004776">
    <property type="term" value="F:succinate-CoA ligase (GDP-forming) activity"/>
    <property type="evidence" value="ECO:0007669"/>
    <property type="project" value="RHEA"/>
</dbReference>
<dbReference type="GO" id="GO:0006104">
    <property type="term" value="P:succinyl-CoA metabolic process"/>
    <property type="evidence" value="ECO:0007669"/>
    <property type="project" value="TreeGrafter"/>
</dbReference>
<dbReference type="GO" id="GO:0006099">
    <property type="term" value="P:tricarboxylic acid cycle"/>
    <property type="evidence" value="ECO:0007669"/>
    <property type="project" value="UniProtKB-UniRule"/>
</dbReference>
<dbReference type="FunFam" id="3.30.1490.20:FF:000014">
    <property type="entry name" value="Succinate--CoA ligase [ADP-forming] subunit beta"/>
    <property type="match status" value="1"/>
</dbReference>
<dbReference type="FunFam" id="3.30.470.20:FF:000002">
    <property type="entry name" value="Succinate--CoA ligase [ADP-forming] subunit beta"/>
    <property type="match status" value="1"/>
</dbReference>
<dbReference type="FunFam" id="3.40.50.261:FF:000007">
    <property type="entry name" value="Succinate--CoA ligase [ADP-forming] subunit beta"/>
    <property type="match status" value="1"/>
</dbReference>
<dbReference type="Gene3D" id="3.30.1490.20">
    <property type="entry name" value="ATP-grasp fold, A domain"/>
    <property type="match status" value="1"/>
</dbReference>
<dbReference type="Gene3D" id="3.30.470.20">
    <property type="entry name" value="ATP-grasp fold, B domain"/>
    <property type="match status" value="1"/>
</dbReference>
<dbReference type="Gene3D" id="3.40.50.261">
    <property type="entry name" value="Succinyl-CoA synthetase domains"/>
    <property type="match status" value="1"/>
</dbReference>
<dbReference type="HAMAP" id="MF_00558">
    <property type="entry name" value="Succ_CoA_beta"/>
    <property type="match status" value="1"/>
</dbReference>
<dbReference type="InterPro" id="IPR011761">
    <property type="entry name" value="ATP-grasp"/>
</dbReference>
<dbReference type="InterPro" id="IPR013650">
    <property type="entry name" value="ATP-grasp_succ-CoA_synth-type"/>
</dbReference>
<dbReference type="InterPro" id="IPR013815">
    <property type="entry name" value="ATP_grasp_subdomain_1"/>
</dbReference>
<dbReference type="InterPro" id="IPR017866">
    <property type="entry name" value="Succ-CoA_synthase_bsu_CS"/>
</dbReference>
<dbReference type="InterPro" id="IPR005811">
    <property type="entry name" value="SUCC_ACL_C"/>
</dbReference>
<dbReference type="InterPro" id="IPR005809">
    <property type="entry name" value="Succ_CoA_ligase-like_bsu"/>
</dbReference>
<dbReference type="InterPro" id="IPR016102">
    <property type="entry name" value="Succinyl-CoA_synth-like"/>
</dbReference>
<dbReference type="NCBIfam" id="NF001913">
    <property type="entry name" value="PRK00696.1"/>
    <property type="match status" value="1"/>
</dbReference>
<dbReference type="NCBIfam" id="TIGR01016">
    <property type="entry name" value="sucCoAbeta"/>
    <property type="match status" value="1"/>
</dbReference>
<dbReference type="PANTHER" id="PTHR11815:SF10">
    <property type="entry name" value="SUCCINATE--COA LIGASE [GDP-FORMING] SUBUNIT BETA, MITOCHONDRIAL"/>
    <property type="match status" value="1"/>
</dbReference>
<dbReference type="PANTHER" id="PTHR11815">
    <property type="entry name" value="SUCCINYL-COA SYNTHETASE BETA CHAIN"/>
    <property type="match status" value="1"/>
</dbReference>
<dbReference type="Pfam" id="PF08442">
    <property type="entry name" value="ATP-grasp_2"/>
    <property type="match status" value="1"/>
</dbReference>
<dbReference type="Pfam" id="PF00549">
    <property type="entry name" value="Ligase_CoA"/>
    <property type="match status" value="1"/>
</dbReference>
<dbReference type="PIRSF" id="PIRSF001554">
    <property type="entry name" value="SucCS_beta"/>
    <property type="match status" value="1"/>
</dbReference>
<dbReference type="SUPFAM" id="SSF56059">
    <property type="entry name" value="Glutathione synthetase ATP-binding domain-like"/>
    <property type="match status" value="1"/>
</dbReference>
<dbReference type="SUPFAM" id="SSF52210">
    <property type="entry name" value="Succinyl-CoA synthetase domains"/>
    <property type="match status" value="1"/>
</dbReference>
<dbReference type="PROSITE" id="PS50975">
    <property type="entry name" value="ATP_GRASP"/>
    <property type="match status" value="1"/>
</dbReference>
<dbReference type="PROSITE" id="PS01217">
    <property type="entry name" value="SUCCINYL_COA_LIG_3"/>
    <property type="match status" value="1"/>
</dbReference>
<keyword id="KW-0067">ATP-binding</keyword>
<keyword id="KW-0436">Ligase</keyword>
<keyword id="KW-0460">Magnesium</keyword>
<keyword id="KW-0479">Metal-binding</keyword>
<keyword id="KW-0547">Nucleotide-binding</keyword>
<keyword id="KW-0816">Tricarboxylic acid cycle</keyword>
<protein>
    <recommendedName>
        <fullName evidence="1">Succinate--CoA ligase [ADP-forming] subunit beta</fullName>
        <ecNumber evidence="1">6.2.1.5</ecNumber>
    </recommendedName>
    <alternativeName>
        <fullName evidence="1">Succinyl-CoA synthetase subunit beta</fullName>
        <shortName evidence="1">SCS-beta</shortName>
    </alternativeName>
</protein>
<feature type="chain" id="PRO_1000082182" description="Succinate--CoA ligase [ADP-forming] subunit beta">
    <location>
        <begin position="1"/>
        <end position="382"/>
    </location>
</feature>
<feature type="domain" description="ATP-grasp" evidence="1">
    <location>
        <begin position="9"/>
        <end position="240"/>
    </location>
</feature>
<feature type="binding site" evidence="1">
    <location>
        <position position="45"/>
    </location>
    <ligand>
        <name>ATP</name>
        <dbReference type="ChEBI" id="CHEBI:30616"/>
    </ligand>
</feature>
<feature type="binding site" evidence="1">
    <location>
        <begin position="52"/>
        <end position="54"/>
    </location>
    <ligand>
        <name>ATP</name>
        <dbReference type="ChEBI" id="CHEBI:30616"/>
    </ligand>
</feature>
<feature type="binding site" evidence="1">
    <location>
        <position position="94"/>
    </location>
    <ligand>
        <name>ATP</name>
        <dbReference type="ChEBI" id="CHEBI:30616"/>
    </ligand>
</feature>
<feature type="binding site" evidence="1">
    <location>
        <position position="99"/>
    </location>
    <ligand>
        <name>ATP</name>
        <dbReference type="ChEBI" id="CHEBI:30616"/>
    </ligand>
</feature>
<feature type="binding site" evidence="1">
    <location>
        <position position="193"/>
    </location>
    <ligand>
        <name>Mg(2+)</name>
        <dbReference type="ChEBI" id="CHEBI:18420"/>
    </ligand>
</feature>
<feature type="binding site" evidence="1">
    <location>
        <position position="207"/>
    </location>
    <ligand>
        <name>Mg(2+)</name>
        <dbReference type="ChEBI" id="CHEBI:18420"/>
    </ligand>
</feature>
<feature type="binding site" evidence="1">
    <location>
        <position position="260"/>
    </location>
    <ligand>
        <name>substrate</name>
        <note>ligand shared with subunit alpha</note>
    </ligand>
</feature>
<feature type="binding site" evidence="1">
    <location>
        <begin position="317"/>
        <end position="319"/>
    </location>
    <ligand>
        <name>substrate</name>
        <note>ligand shared with subunit alpha</note>
    </ligand>
</feature>
<reference key="1">
    <citation type="submission" date="2006-12" db="EMBL/GenBank/DDBJ databases">
        <title>Complete sequence of Pyrobaculum islandicum DSM 4184.</title>
        <authorList>
            <person name="Copeland A."/>
            <person name="Lucas S."/>
            <person name="Lapidus A."/>
            <person name="Barry K."/>
            <person name="Detter J.C."/>
            <person name="Glavina del Rio T."/>
            <person name="Dalin E."/>
            <person name="Tice H."/>
            <person name="Pitluck S."/>
            <person name="Meincke L."/>
            <person name="Brettin T."/>
            <person name="Bruce D."/>
            <person name="Han C."/>
            <person name="Tapia R."/>
            <person name="Gilna P."/>
            <person name="Schmutz J."/>
            <person name="Larimer F."/>
            <person name="Land M."/>
            <person name="Hauser L."/>
            <person name="Kyrpides N."/>
            <person name="Mikhailova N."/>
            <person name="Cozen A.E."/>
            <person name="Fitz-Gibbon S.T."/>
            <person name="House C.H."/>
            <person name="Saltikov C."/>
            <person name="Lowe T."/>
            <person name="Richardson P."/>
        </authorList>
    </citation>
    <scope>NUCLEOTIDE SEQUENCE [LARGE SCALE GENOMIC DNA]</scope>
    <source>
        <strain>DSM 4184 / JCM 9189 / GEO3</strain>
    </source>
</reference>
<name>SUCC_PYRIL</name>
<accession>A1RTB8</accession>